<name>Y3874_MYCTU</name>
<reference key="1">
    <citation type="journal article" date="1998" name="Nature">
        <title>Deciphering the biology of Mycobacterium tuberculosis from the complete genome sequence.</title>
        <authorList>
            <person name="Cole S.T."/>
            <person name="Brosch R."/>
            <person name="Parkhill J."/>
            <person name="Garnier T."/>
            <person name="Churcher C.M."/>
            <person name="Harris D.E."/>
            <person name="Gordon S.V."/>
            <person name="Eiglmeier K."/>
            <person name="Gas S."/>
            <person name="Barry C.E. III"/>
            <person name="Tekaia F."/>
            <person name="Badcock K."/>
            <person name="Basham D."/>
            <person name="Brown D."/>
            <person name="Chillingworth T."/>
            <person name="Connor R."/>
            <person name="Davies R.M."/>
            <person name="Devlin K."/>
            <person name="Feltwell T."/>
            <person name="Gentles S."/>
            <person name="Hamlin N."/>
            <person name="Holroyd S."/>
            <person name="Hornsby T."/>
            <person name="Jagels K."/>
            <person name="Krogh A."/>
            <person name="McLean J."/>
            <person name="Moule S."/>
            <person name="Murphy L.D."/>
            <person name="Oliver S."/>
            <person name="Osborne J."/>
            <person name="Quail M.A."/>
            <person name="Rajandream M.A."/>
            <person name="Rogers J."/>
            <person name="Rutter S."/>
            <person name="Seeger K."/>
            <person name="Skelton S."/>
            <person name="Squares S."/>
            <person name="Squares R."/>
            <person name="Sulston J.E."/>
            <person name="Taylor K."/>
            <person name="Whitehead S."/>
            <person name="Barrell B.G."/>
        </authorList>
    </citation>
    <scope>NUCLEOTIDE SEQUENCE [LARGE SCALE GENOMIC DNA]</scope>
    <source>
        <strain>ATCC 25618 / H37Rv</strain>
    </source>
</reference>
<reference key="2">
    <citation type="journal article" date="2011" name="Mol. Cell. Proteomics">
        <title>Proteogenomic analysis of Mycobacterium tuberculosis by high resolution mass spectrometry.</title>
        <authorList>
            <person name="Kelkar D.S."/>
            <person name="Kumar D."/>
            <person name="Kumar P."/>
            <person name="Balakrishnan L."/>
            <person name="Muthusamy B."/>
            <person name="Yadav A.K."/>
            <person name="Shrivastava P."/>
            <person name="Marimuthu A."/>
            <person name="Anand S."/>
            <person name="Sundaram H."/>
            <person name="Kingsbury R."/>
            <person name="Harsha H.C."/>
            <person name="Nair B."/>
            <person name="Prasad T.S."/>
            <person name="Chauhan D.S."/>
            <person name="Katoch K."/>
            <person name="Katoch V.M."/>
            <person name="Kumar P."/>
            <person name="Chaerkady R."/>
            <person name="Ramachandran S."/>
            <person name="Dash D."/>
            <person name="Pandey A."/>
        </authorList>
    </citation>
    <scope>IDENTIFICATION BY MASS SPECTROMETRY [LARGE SCALE ANALYSIS]</scope>
    <source>
        <strain>ATCC 25618 / H37Rv</strain>
    </source>
</reference>
<comment type="function">
    <text evidence="1">Exhibits S-adenosyl-L-methionine-dependent methyltransferase activity.</text>
</comment>
<comment type="similarity">
    <text evidence="2">Belongs to the UPF0677 family.</text>
</comment>
<protein>
    <recommendedName>
        <fullName>Putative S-adenosyl-L-methionine-dependent methyltransferase Rv3767c</fullName>
        <ecNumber>2.1.1.-</ecNumber>
    </recommendedName>
</protein>
<keyword id="KW-0489">Methyltransferase</keyword>
<keyword id="KW-1185">Reference proteome</keyword>
<keyword id="KW-0949">S-adenosyl-L-methionine</keyword>
<keyword id="KW-0808">Transferase</keyword>
<feature type="chain" id="PRO_0000361240" description="Putative S-adenosyl-L-methionine-dependent methyltransferase Rv3767c">
    <location>
        <begin position="1"/>
        <end position="314"/>
    </location>
</feature>
<feature type="binding site" evidence="1">
    <location>
        <position position="132"/>
    </location>
    <ligand>
        <name>S-adenosyl-L-methionine</name>
        <dbReference type="ChEBI" id="CHEBI:59789"/>
    </ligand>
</feature>
<feature type="binding site" evidence="1">
    <location>
        <begin position="161"/>
        <end position="162"/>
    </location>
    <ligand>
        <name>S-adenosyl-L-methionine</name>
        <dbReference type="ChEBI" id="CHEBI:59789"/>
    </ligand>
</feature>
<dbReference type="EC" id="2.1.1.-"/>
<dbReference type="EMBL" id="AL123456">
    <property type="protein sequence ID" value="CCP46594.1"/>
    <property type="molecule type" value="Genomic_DNA"/>
</dbReference>
<dbReference type="PIR" id="H70801">
    <property type="entry name" value="H70801"/>
</dbReference>
<dbReference type="RefSeq" id="NP_218284.1">
    <property type="nucleotide sequence ID" value="NC_000962.3"/>
</dbReference>
<dbReference type="RefSeq" id="WP_003420557.1">
    <property type="nucleotide sequence ID" value="NZ_NVQJ01000009.1"/>
</dbReference>
<dbReference type="SMR" id="P9WFH5"/>
<dbReference type="FunCoup" id="P9WFH5">
    <property type="interactions" value="1"/>
</dbReference>
<dbReference type="STRING" id="83332.Rv3767c"/>
<dbReference type="PaxDb" id="83332-Rv3767c"/>
<dbReference type="DNASU" id="886101"/>
<dbReference type="GeneID" id="886101"/>
<dbReference type="KEGG" id="mtu:Rv3767c"/>
<dbReference type="KEGG" id="mtv:RVBD_3767c"/>
<dbReference type="TubercuList" id="Rv3767c"/>
<dbReference type="eggNOG" id="COG3315">
    <property type="taxonomic scope" value="Bacteria"/>
</dbReference>
<dbReference type="InParanoid" id="P9WFH5"/>
<dbReference type="OrthoDB" id="9806164at2"/>
<dbReference type="PhylomeDB" id="P9WFH5"/>
<dbReference type="Proteomes" id="UP000001584">
    <property type="component" value="Chromosome"/>
</dbReference>
<dbReference type="GO" id="GO:0005886">
    <property type="term" value="C:plasma membrane"/>
    <property type="evidence" value="ECO:0007005"/>
    <property type="project" value="MTBBASE"/>
</dbReference>
<dbReference type="GO" id="GO:0008168">
    <property type="term" value="F:methyltransferase activity"/>
    <property type="evidence" value="ECO:0007669"/>
    <property type="project" value="UniProtKB-KW"/>
</dbReference>
<dbReference type="GO" id="GO:0032259">
    <property type="term" value="P:methylation"/>
    <property type="evidence" value="ECO:0007669"/>
    <property type="project" value="UniProtKB-KW"/>
</dbReference>
<dbReference type="FunFam" id="3.40.50.150:FF:000152">
    <property type="entry name" value="S-adenosyl-L-methionine-dependent methyltransferase"/>
    <property type="match status" value="1"/>
</dbReference>
<dbReference type="Gene3D" id="3.40.50.150">
    <property type="entry name" value="Vaccinia Virus protein VP39"/>
    <property type="match status" value="1"/>
</dbReference>
<dbReference type="InterPro" id="IPR007213">
    <property type="entry name" value="Ppm1/Ppm2/Tcmp"/>
</dbReference>
<dbReference type="InterPro" id="IPR029063">
    <property type="entry name" value="SAM-dependent_MTases_sf"/>
</dbReference>
<dbReference type="InterPro" id="IPR011610">
    <property type="entry name" value="SAM_mthyl_Trfase_ML2640-like"/>
</dbReference>
<dbReference type="NCBIfam" id="TIGR00027">
    <property type="entry name" value="mthyl_TIGR00027"/>
    <property type="match status" value="1"/>
</dbReference>
<dbReference type="PANTHER" id="PTHR43619">
    <property type="entry name" value="S-ADENOSYL-L-METHIONINE-DEPENDENT METHYLTRANSFERASE YKTD-RELATED"/>
    <property type="match status" value="1"/>
</dbReference>
<dbReference type="PANTHER" id="PTHR43619:SF2">
    <property type="entry name" value="S-ADENOSYL-L-METHIONINE-DEPENDENT METHYLTRANSFERASES SUPERFAMILY PROTEIN"/>
    <property type="match status" value="1"/>
</dbReference>
<dbReference type="Pfam" id="PF04072">
    <property type="entry name" value="LCM"/>
    <property type="match status" value="1"/>
</dbReference>
<dbReference type="SUPFAM" id="SSF53335">
    <property type="entry name" value="S-adenosyl-L-methionine-dependent methyltransferases"/>
    <property type="match status" value="1"/>
</dbReference>
<accession>P9WFH5</accession>
<accession>L0TDR0</accession>
<accession>O86359</accession>
<accession>Q7D4W6</accession>
<gene>
    <name type="ordered locus">Rv3767c</name>
</gene>
<proteinExistence type="evidence at protein level"/>
<organism>
    <name type="scientific">Mycobacterium tuberculosis (strain ATCC 25618 / H37Rv)</name>
    <dbReference type="NCBI Taxonomy" id="83332"/>
    <lineage>
        <taxon>Bacteria</taxon>
        <taxon>Bacillati</taxon>
        <taxon>Actinomycetota</taxon>
        <taxon>Actinomycetes</taxon>
        <taxon>Mycobacteriales</taxon>
        <taxon>Mycobacteriaceae</taxon>
        <taxon>Mycobacterium</taxon>
        <taxon>Mycobacterium tuberculosis complex</taxon>
    </lineage>
</organism>
<evidence type="ECO:0000250" key="1"/>
<evidence type="ECO:0000305" key="2"/>
<sequence length="314" mass="34755">MPRTDNDSWAITESVGATALGVAAARAAETESDNPLINDPFARIFVDAAGDGIWSMYTNRTLLAGATDLDPDLRAPIQQMIDFMAARTAFFDEYFLATADAGVRQVVILASGLDSRAWRLPWPDGTVVYELDQPKVLEFKSATLRQHGAQPASQLVNVPIDLRQDWPKALQKAGFDPSKPCAWLAEGLVRYLPARAQDLLFERIDALSRPGSWLASNVPGAGFLDPERMRRQRADMRRMRAAAAKLVETEISDVDDLWYAEQRTAVAEWLRERGWDVSTATLPELLARYGRSIPHSGEDSIPPNLFVSAQRATS</sequence>